<protein>
    <recommendedName>
        <fullName>Uncharacterized protein AF_0243</fullName>
    </recommendedName>
</protein>
<proteinExistence type="predicted"/>
<comment type="cofactor">
    <cofactor evidence="1">
        <name>[4Fe-4S] cluster</name>
        <dbReference type="ChEBI" id="CHEBI:49883"/>
    </cofactor>
</comment>
<organism>
    <name type="scientific">Archaeoglobus fulgidus (strain ATCC 49558 / DSM 4304 / JCM 9628 / NBRC 100126 / VC-16)</name>
    <dbReference type="NCBI Taxonomy" id="224325"/>
    <lineage>
        <taxon>Archaea</taxon>
        <taxon>Methanobacteriati</taxon>
        <taxon>Methanobacteriota</taxon>
        <taxon>Archaeoglobi</taxon>
        <taxon>Archaeoglobales</taxon>
        <taxon>Archaeoglobaceae</taxon>
        <taxon>Archaeoglobus</taxon>
    </lineage>
</organism>
<evidence type="ECO:0000255" key="1">
    <source>
        <dbReference type="PROSITE-ProRule" id="PRU01266"/>
    </source>
</evidence>
<dbReference type="EMBL" id="AE000782">
    <property type="protein sequence ID" value="AAB90990.1"/>
    <property type="molecule type" value="Genomic_DNA"/>
</dbReference>
<dbReference type="PIR" id="C69280">
    <property type="entry name" value="C69280"/>
</dbReference>
<dbReference type="RefSeq" id="WP_010877754.1">
    <property type="nucleotide sequence ID" value="NC_000917.1"/>
</dbReference>
<dbReference type="STRING" id="224325.AF_0243"/>
<dbReference type="PaxDb" id="224325-AF_0243"/>
<dbReference type="EnsemblBacteria" id="AAB90990">
    <property type="protein sequence ID" value="AAB90990"/>
    <property type="gene ID" value="AF_0243"/>
</dbReference>
<dbReference type="KEGG" id="afu:AF_0243"/>
<dbReference type="eggNOG" id="arCOG01359">
    <property type="taxonomic scope" value="Archaea"/>
</dbReference>
<dbReference type="HOGENOM" id="CLU_533842_0_0_2"/>
<dbReference type="OrthoDB" id="358785at2157"/>
<dbReference type="PhylomeDB" id="O29996"/>
<dbReference type="Proteomes" id="UP000002199">
    <property type="component" value="Chromosome"/>
</dbReference>
<dbReference type="GO" id="GO:0051539">
    <property type="term" value="F:4 iron, 4 sulfur cluster binding"/>
    <property type="evidence" value="ECO:0007669"/>
    <property type="project" value="UniProtKB-KW"/>
</dbReference>
<dbReference type="GO" id="GO:0003824">
    <property type="term" value="F:catalytic activity"/>
    <property type="evidence" value="ECO:0007669"/>
    <property type="project" value="InterPro"/>
</dbReference>
<dbReference type="GO" id="GO:0046872">
    <property type="term" value="F:metal ion binding"/>
    <property type="evidence" value="ECO:0007669"/>
    <property type="project" value="UniProtKB-KW"/>
</dbReference>
<dbReference type="CDD" id="cd01335">
    <property type="entry name" value="Radical_SAM"/>
    <property type="match status" value="1"/>
</dbReference>
<dbReference type="Gene3D" id="3.80.30.20">
    <property type="entry name" value="tm_1862 like domain"/>
    <property type="match status" value="1"/>
</dbReference>
<dbReference type="InterPro" id="IPR006638">
    <property type="entry name" value="Elp3/MiaA/NifB-like_rSAM"/>
</dbReference>
<dbReference type="InterPro" id="IPR007197">
    <property type="entry name" value="rSAM"/>
</dbReference>
<dbReference type="InterPro" id="IPR023404">
    <property type="entry name" value="rSAM_horseshoe"/>
</dbReference>
<dbReference type="PANTHER" id="PTHR43324">
    <property type="match status" value="1"/>
</dbReference>
<dbReference type="PANTHER" id="PTHR43324:SF1">
    <property type="entry name" value="RADICAL SAM CORE DOMAIN-CONTAINING PROTEIN"/>
    <property type="match status" value="1"/>
</dbReference>
<dbReference type="Pfam" id="PF04055">
    <property type="entry name" value="Radical_SAM"/>
    <property type="match status" value="1"/>
</dbReference>
<dbReference type="SFLD" id="SFLDG01082">
    <property type="entry name" value="B12-binding_domain_containing"/>
    <property type="match status" value="1"/>
</dbReference>
<dbReference type="SFLD" id="SFLDS00029">
    <property type="entry name" value="Radical_SAM"/>
    <property type="match status" value="1"/>
</dbReference>
<dbReference type="SMART" id="SM00729">
    <property type="entry name" value="Elp3"/>
    <property type="match status" value="1"/>
</dbReference>
<dbReference type="SUPFAM" id="SSF102114">
    <property type="entry name" value="Radical SAM enzymes"/>
    <property type="match status" value="1"/>
</dbReference>
<dbReference type="PROSITE" id="PS51918">
    <property type="entry name" value="RADICAL_SAM"/>
    <property type="match status" value="1"/>
</dbReference>
<keyword id="KW-0004">4Fe-4S</keyword>
<keyword id="KW-0408">Iron</keyword>
<keyword id="KW-0411">Iron-sulfur</keyword>
<keyword id="KW-0479">Metal-binding</keyword>
<keyword id="KW-1185">Reference proteome</keyword>
<keyword id="KW-0949">S-adenosyl-L-methionine</keyword>
<feature type="chain" id="PRO_0000106767" description="Uncharacterized protein AF_0243">
    <location>
        <begin position="1"/>
        <end position="529"/>
    </location>
</feature>
<feature type="domain" description="Radical SAM core" evidence="1">
    <location>
        <begin position="157"/>
        <end position="410"/>
    </location>
</feature>
<feature type="binding site" evidence="1">
    <location>
        <position position="171"/>
    </location>
    <ligand>
        <name>[4Fe-4S] cluster</name>
        <dbReference type="ChEBI" id="CHEBI:49883"/>
        <note>4Fe-4S-S-AdoMet</note>
    </ligand>
</feature>
<feature type="binding site" evidence="1">
    <location>
        <position position="176"/>
    </location>
    <ligand>
        <name>[4Fe-4S] cluster</name>
        <dbReference type="ChEBI" id="CHEBI:49883"/>
        <note>4Fe-4S-S-AdoMet</note>
    </ligand>
</feature>
<feature type="binding site" evidence="1">
    <location>
        <position position="179"/>
    </location>
    <ligand>
        <name>[4Fe-4S] cluster</name>
        <dbReference type="ChEBI" id="CHEBI:49883"/>
        <note>4Fe-4S-S-AdoMet</note>
    </ligand>
</feature>
<accession>O29996</accession>
<gene>
    <name type="ordered locus">AF_0243</name>
</gene>
<reference key="1">
    <citation type="journal article" date="1997" name="Nature">
        <title>The complete genome sequence of the hyperthermophilic, sulphate-reducing archaeon Archaeoglobus fulgidus.</title>
        <authorList>
            <person name="Klenk H.-P."/>
            <person name="Clayton R.A."/>
            <person name="Tomb J.-F."/>
            <person name="White O."/>
            <person name="Nelson K.E."/>
            <person name="Ketchum K.A."/>
            <person name="Dodson R.J."/>
            <person name="Gwinn M.L."/>
            <person name="Hickey E.K."/>
            <person name="Peterson J.D."/>
            <person name="Richardson D.L."/>
            <person name="Kerlavage A.R."/>
            <person name="Graham D.E."/>
            <person name="Kyrpides N.C."/>
            <person name="Fleischmann R.D."/>
            <person name="Quackenbush J."/>
            <person name="Lee N.H."/>
            <person name="Sutton G.G."/>
            <person name="Gill S.R."/>
            <person name="Kirkness E.F."/>
            <person name="Dougherty B.A."/>
            <person name="McKenney K."/>
            <person name="Adams M.D."/>
            <person name="Loftus B.J."/>
            <person name="Peterson S.N."/>
            <person name="Reich C.I."/>
            <person name="McNeil L.K."/>
            <person name="Badger J.H."/>
            <person name="Glodek A."/>
            <person name="Zhou L."/>
            <person name="Overbeek R."/>
            <person name="Gocayne J.D."/>
            <person name="Weidman J.F."/>
            <person name="McDonald L.A."/>
            <person name="Utterback T.R."/>
            <person name="Cotton M.D."/>
            <person name="Spriggs T."/>
            <person name="Artiach P."/>
            <person name="Kaine B.P."/>
            <person name="Sykes S.M."/>
            <person name="Sadow P.W."/>
            <person name="D'Andrea K.P."/>
            <person name="Bowman C."/>
            <person name="Fujii C."/>
            <person name="Garland S.A."/>
            <person name="Mason T.M."/>
            <person name="Olsen G.J."/>
            <person name="Fraser C.M."/>
            <person name="Smith H.O."/>
            <person name="Woese C.R."/>
            <person name="Venter J.C."/>
        </authorList>
    </citation>
    <scope>NUCLEOTIDE SEQUENCE [LARGE SCALE GENOMIC DNA]</scope>
    <source>
        <strain>ATCC 49558 / DSM 4304 / JCM 9628 / NBRC 100126 / VC-16</strain>
    </source>
</reference>
<sequence>MKAAIIDGYVDEPSCLGVPPYVAPYPRYIYGMLKSLDYEATYFTIDHLRAHPETVERLKKFDLAVIIAGIAVPGKYLGGKPLSKKELFSMGLAERNLLVGPITLELSQKELRMLEDVEIEVIDFPFERKLFERLGGEKFNLNAFAARGAEVVRQHPDFPHIICEIETYRGCYWGKCSFCIERVHSLWFRSPEDVLGEVKALYDCGVRHFRLGRQTDFFSYLGEFEGVPRPNPEAMKKFHRAIWDLCPKIKTLHIDNVNPKTIAEHPEESAELIKTIVMYQTPGNVAAMGLESADERVVRKNSLAASPEEVMFAIELINRYGRHPSYNGLPYFLPGINFVIGLKGETKETFELNYRFLEEVMERNLLLRRINIRQVKIFPGTPMEKEGDRRLKKHRKEFIAFKNRVRENIDTPMLKKILPKGRRITDLRVEVEGKISYARQLATYPILVGLVGKYPRNLYVDARVVDYGHRSVTAVEADLDVNKATLEQLEFLLGKVGREVYMRRPIGSDAELEAIGGKEALVYLKVGGE</sequence>
<name>Y243_ARCFU</name>